<sequence>MAQILAPSTQWQMRITKTSPCATPITSKMWSSLVMKQTKKVAHSAKFRVMAVNSENGTINRVEDLLNLDITPFTDSIIAEYIWIGGTGIDVRSKSRTISKPVSHPSEVPKWNYDGSSTGQAPGEDSEVILYPQAIFKDPFRGGNNILVVCDAYTPAGEPIPTNKRHRAAEIFSNPKVEAEIPWYGIEQEYTLLQTNVKWPLGWPVGGYPGPQGPYYCAAGADKSFGRDISDAHYKACIYAGINISGTNGEVMPGQWEYQVGPSVGIEAGDHIWASRYILERITEQAGVVLTLDPKPIEGDWNGAGCHTNYSTKSMREDGGFEVIKKAILNLSLRHKIHIEAYGEGNERRLTGKHETASINDFSWGVANRGCSIRVGRDTEKNGKGYLEDRRPASNMDPYVVTALLAESTLLWEPTLEAEALAAQKIALKV</sequence>
<feature type="transit peptide" description="Chloroplast">
    <location>
        <begin position="1"/>
        <end position="49"/>
    </location>
</feature>
<feature type="chain" id="PRO_0000011182" description="Glutamine synthetase leaf isozyme, chloroplastic">
    <location>
        <begin position="50"/>
        <end position="430"/>
    </location>
</feature>
<feature type="domain" description="GS beta-grasp" evidence="1">
    <location>
        <begin position="77"/>
        <end position="157"/>
    </location>
</feature>
<feature type="domain" description="GS catalytic" evidence="2">
    <location>
        <begin position="161"/>
        <end position="430"/>
    </location>
</feature>
<feature type="region of interest" description="Disordered" evidence="3">
    <location>
        <begin position="99"/>
        <end position="119"/>
    </location>
</feature>
<proteinExistence type="evidence at transcript level"/>
<accession>P08281</accession>
<comment type="function">
    <text>The light-modulated chloroplast enzyme, encoded by a nuclear gene and expressed primarily in leaves, is responsible for the reassimilation of the ammonia generated by photorespiration.</text>
</comment>
<comment type="catalytic activity">
    <reaction>
        <text>L-glutamate + NH4(+) + ATP = L-glutamine + ADP + phosphate + H(+)</text>
        <dbReference type="Rhea" id="RHEA:16169"/>
        <dbReference type="ChEBI" id="CHEBI:15378"/>
        <dbReference type="ChEBI" id="CHEBI:28938"/>
        <dbReference type="ChEBI" id="CHEBI:29985"/>
        <dbReference type="ChEBI" id="CHEBI:30616"/>
        <dbReference type="ChEBI" id="CHEBI:43474"/>
        <dbReference type="ChEBI" id="CHEBI:58359"/>
        <dbReference type="ChEBI" id="CHEBI:456216"/>
        <dbReference type="EC" id="6.3.1.2"/>
    </reaction>
</comment>
<comment type="subunit">
    <text>Homooctamer.</text>
</comment>
<comment type="subcellular location">
    <subcellularLocation>
        <location>Plastid</location>
        <location>Chloroplast</location>
    </subcellularLocation>
</comment>
<comment type="miscellaneous">
    <text>In pea there are distinct isozymes in leaves, roots and nodules.</text>
</comment>
<comment type="miscellaneous">
    <text>Irreversibly inhibited by the herbicide L-phosphinothricin (PPT).</text>
</comment>
<comment type="similarity">
    <text evidence="4">Belongs to the glutamine synthetase family.</text>
</comment>
<reference key="1">
    <citation type="journal article" date="1988" name="J. Biol. Chem.">
        <title>Chloroplast and cytosolic glutamine synthetase are encoded by homologous nuclear genes which are differentially expressed in vivo.</title>
        <authorList>
            <person name="Tingey S.V."/>
            <person name="Tsai F."/>
            <person name="Edwards J."/>
            <person name="Walker E.L."/>
            <person name="Coruzzi G.M."/>
        </authorList>
    </citation>
    <scope>NUCLEOTIDE SEQUENCE [MRNA]</scope>
</reference>
<reference key="2">
    <citation type="journal article" date="1987" name="EMBO J.">
        <title>Glutamine synthetase genes of pea encode distinct polypeptides which are differentially expressed in leaves, roots and nodules.</title>
        <authorList>
            <person name="Tingey S.V."/>
            <person name="Walker E.L."/>
            <person name="Coruzzi G.M."/>
        </authorList>
    </citation>
    <scope>NUCLEOTIDE SEQUENCE [MRNA] OF 58-430</scope>
    <source>
        <strain>cv. Sparkle</strain>
    </source>
</reference>
<name>GLNA2_PEA</name>
<dbReference type="EC" id="6.3.1.2"/>
<dbReference type="EMBL" id="M20664">
    <property type="protein sequence ID" value="AAA33653.1"/>
    <property type="molecule type" value="mRNA"/>
</dbReference>
<dbReference type="EMBL" id="X05514">
    <property type="protein sequence ID" value="CAA29057.1"/>
    <property type="molecule type" value="mRNA"/>
</dbReference>
<dbReference type="PIR" id="A28089">
    <property type="entry name" value="AJPMQ2"/>
</dbReference>
<dbReference type="SMR" id="P08281"/>
<dbReference type="GO" id="GO:0009507">
    <property type="term" value="C:chloroplast"/>
    <property type="evidence" value="ECO:0007669"/>
    <property type="project" value="UniProtKB-SubCell"/>
</dbReference>
<dbReference type="GO" id="GO:0005524">
    <property type="term" value="F:ATP binding"/>
    <property type="evidence" value="ECO:0007669"/>
    <property type="project" value="UniProtKB-KW"/>
</dbReference>
<dbReference type="GO" id="GO:0004356">
    <property type="term" value="F:glutamine synthetase activity"/>
    <property type="evidence" value="ECO:0007669"/>
    <property type="project" value="UniProtKB-EC"/>
</dbReference>
<dbReference type="GO" id="GO:0006542">
    <property type="term" value="P:glutamine biosynthetic process"/>
    <property type="evidence" value="ECO:0007669"/>
    <property type="project" value="InterPro"/>
</dbReference>
<dbReference type="FunFam" id="3.30.590.10:FF:000004">
    <property type="entry name" value="Glutamine synthetase"/>
    <property type="match status" value="1"/>
</dbReference>
<dbReference type="FunFam" id="3.10.20.70:FF:000003">
    <property type="entry name" value="Glutamine synthetase, chloroplastic"/>
    <property type="match status" value="1"/>
</dbReference>
<dbReference type="Gene3D" id="3.10.20.70">
    <property type="entry name" value="Glutamine synthetase, N-terminal domain"/>
    <property type="match status" value="1"/>
</dbReference>
<dbReference type="Gene3D" id="3.30.590.10">
    <property type="entry name" value="Glutamine synthetase/guanido kinase, catalytic domain"/>
    <property type="match status" value="1"/>
</dbReference>
<dbReference type="InterPro" id="IPR008147">
    <property type="entry name" value="Gln_synt_N"/>
</dbReference>
<dbReference type="InterPro" id="IPR036651">
    <property type="entry name" value="Gln_synt_N_sf"/>
</dbReference>
<dbReference type="InterPro" id="IPR014746">
    <property type="entry name" value="Gln_synth/guanido_kin_cat_dom"/>
</dbReference>
<dbReference type="InterPro" id="IPR008146">
    <property type="entry name" value="Gln_synth_cat_dom"/>
</dbReference>
<dbReference type="InterPro" id="IPR027303">
    <property type="entry name" value="Gln_synth_gly_rich_site"/>
</dbReference>
<dbReference type="InterPro" id="IPR027302">
    <property type="entry name" value="Gln_synth_N_conserv_site"/>
</dbReference>
<dbReference type="InterPro" id="IPR050292">
    <property type="entry name" value="Glutamine_Synthetase"/>
</dbReference>
<dbReference type="PANTHER" id="PTHR20852">
    <property type="entry name" value="GLUTAMINE SYNTHETASE"/>
    <property type="match status" value="1"/>
</dbReference>
<dbReference type="PANTHER" id="PTHR20852:SF118">
    <property type="entry name" value="GLUTAMINE SYNTHETASE, CHLOROPLASTIC_MITOCHONDRIAL"/>
    <property type="match status" value="1"/>
</dbReference>
<dbReference type="Pfam" id="PF00120">
    <property type="entry name" value="Gln-synt_C"/>
    <property type="match status" value="1"/>
</dbReference>
<dbReference type="SMART" id="SM01230">
    <property type="entry name" value="Gln-synt_C"/>
    <property type="match status" value="1"/>
</dbReference>
<dbReference type="SUPFAM" id="SSF54368">
    <property type="entry name" value="Glutamine synthetase, N-terminal domain"/>
    <property type="match status" value="1"/>
</dbReference>
<dbReference type="SUPFAM" id="SSF55931">
    <property type="entry name" value="Glutamine synthetase/guanido kinase"/>
    <property type="match status" value="1"/>
</dbReference>
<dbReference type="PROSITE" id="PS00180">
    <property type="entry name" value="GLNA_1"/>
    <property type="match status" value="1"/>
</dbReference>
<dbReference type="PROSITE" id="PS00181">
    <property type="entry name" value="GLNA_ATP"/>
    <property type="match status" value="1"/>
</dbReference>
<dbReference type="PROSITE" id="PS51986">
    <property type="entry name" value="GS_BETA_GRASP"/>
    <property type="match status" value="1"/>
</dbReference>
<dbReference type="PROSITE" id="PS51987">
    <property type="entry name" value="GS_CATALYTIC"/>
    <property type="match status" value="1"/>
</dbReference>
<organism>
    <name type="scientific">Pisum sativum</name>
    <name type="common">Garden pea</name>
    <name type="synonym">Lathyrus oleraceus</name>
    <dbReference type="NCBI Taxonomy" id="3888"/>
    <lineage>
        <taxon>Eukaryota</taxon>
        <taxon>Viridiplantae</taxon>
        <taxon>Streptophyta</taxon>
        <taxon>Embryophyta</taxon>
        <taxon>Tracheophyta</taxon>
        <taxon>Spermatophyta</taxon>
        <taxon>Magnoliopsida</taxon>
        <taxon>eudicotyledons</taxon>
        <taxon>Gunneridae</taxon>
        <taxon>Pentapetalae</taxon>
        <taxon>rosids</taxon>
        <taxon>fabids</taxon>
        <taxon>Fabales</taxon>
        <taxon>Fabaceae</taxon>
        <taxon>Papilionoideae</taxon>
        <taxon>50 kb inversion clade</taxon>
        <taxon>NPAAA clade</taxon>
        <taxon>Hologalegina</taxon>
        <taxon>IRL clade</taxon>
        <taxon>Fabeae</taxon>
        <taxon>Pisum</taxon>
    </lineage>
</organism>
<gene>
    <name type="primary">GS2</name>
</gene>
<evidence type="ECO:0000255" key="1">
    <source>
        <dbReference type="PROSITE-ProRule" id="PRU01330"/>
    </source>
</evidence>
<evidence type="ECO:0000255" key="2">
    <source>
        <dbReference type="PROSITE-ProRule" id="PRU01331"/>
    </source>
</evidence>
<evidence type="ECO:0000256" key="3">
    <source>
        <dbReference type="SAM" id="MobiDB-lite"/>
    </source>
</evidence>
<evidence type="ECO:0000305" key="4"/>
<protein>
    <recommendedName>
        <fullName>Glutamine synthetase leaf isozyme, chloroplastic</fullName>
        <ecNumber>6.3.1.2</ecNumber>
    </recommendedName>
    <alternativeName>
        <fullName>GS2</fullName>
    </alternativeName>
    <alternativeName>
        <fullName>Glutamate--ammonia ligase</fullName>
    </alternativeName>
</protein>
<keyword id="KW-0067">ATP-binding</keyword>
<keyword id="KW-0150">Chloroplast</keyword>
<keyword id="KW-0436">Ligase</keyword>
<keyword id="KW-0535">Nitrogen fixation</keyword>
<keyword id="KW-0547">Nucleotide-binding</keyword>
<keyword id="KW-0934">Plastid</keyword>
<keyword id="KW-0809">Transit peptide</keyword>